<evidence type="ECO:0000250" key="1"/>
<evidence type="ECO:0000256" key="2">
    <source>
        <dbReference type="SAM" id="MobiDB-lite"/>
    </source>
</evidence>
<evidence type="ECO:0000305" key="3"/>
<protein>
    <recommendedName>
        <fullName>GTP cyclohydrolase 1</fullName>
        <ecNumber>3.5.4.16</ecNumber>
    </recommendedName>
    <alternativeName>
        <fullName>GTP cyclohydrolase I</fullName>
        <shortName>GTP-CH-I</shortName>
    </alternativeName>
</protein>
<keyword id="KW-0342">GTP-binding</keyword>
<keyword id="KW-0378">Hydrolase</keyword>
<keyword id="KW-0479">Metal-binding</keyword>
<keyword id="KW-0547">Nucleotide-binding</keyword>
<keyword id="KW-0554">One-carbon metabolism</keyword>
<keyword id="KW-1185">Reference proteome</keyword>
<keyword id="KW-0862">Zinc</keyword>
<organism>
    <name type="scientific">Deinococcus radiodurans (strain ATCC 13939 / DSM 20539 / JCM 16871 / CCUG 27074 / LMG 4051 / NBRC 15346 / NCIMB 9279 / VKM B-1422 / R1)</name>
    <dbReference type="NCBI Taxonomy" id="243230"/>
    <lineage>
        <taxon>Bacteria</taxon>
        <taxon>Thermotogati</taxon>
        <taxon>Deinococcota</taxon>
        <taxon>Deinococci</taxon>
        <taxon>Deinococcales</taxon>
        <taxon>Deinococcaceae</taxon>
        <taxon>Deinococcus</taxon>
    </lineage>
</organism>
<sequence length="216" mass="23799">MPQARGEGATPPTSLPNPSLKGVPLPDNPNNLEPLTREWLAAIGEDPDREGLQRTPQRVAKAWAYMTEGYGQTLAQVVGEGVFAAEGSEMVIVKDIEFYSMCEHHMLPFYGRAHVAYIPGTRILGLSKFARIVDLYSRRLQVQERITTQVADAVEELLAPKGVAVLMEGIHLCMAMRGVQKQNSSTTTSAMRGLFRSDPRTRAEFMSAVQGTLRGR</sequence>
<feature type="chain" id="PRO_0000119403" description="GTP cyclohydrolase 1">
    <location>
        <begin position="1"/>
        <end position="216"/>
    </location>
</feature>
<feature type="region of interest" description="Disordered" evidence="2">
    <location>
        <begin position="1"/>
        <end position="33"/>
    </location>
</feature>
<feature type="compositionally biased region" description="Low complexity" evidence="2">
    <location>
        <begin position="24"/>
        <end position="33"/>
    </location>
</feature>
<feature type="binding site" evidence="1">
    <location>
        <position position="102"/>
    </location>
    <ligand>
        <name>Zn(2+)</name>
        <dbReference type="ChEBI" id="CHEBI:29105"/>
    </ligand>
</feature>
<feature type="binding site" evidence="1">
    <location>
        <position position="105"/>
    </location>
    <ligand>
        <name>Zn(2+)</name>
        <dbReference type="ChEBI" id="CHEBI:29105"/>
    </ligand>
</feature>
<feature type="binding site" evidence="1">
    <location>
        <position position="173"/>
    </location>
    <ligand>
        <name>Zn(2+)</name>
        <dbReference type="ChEBI" id="CHEBI:29105"/>
    </ligand>
</feature>
<dbReference type="EC" id="3.5.4.16"/>
<dbReference type="EMBL" id="AE000513">
    <property type="protein sequence ID" value="AAF09628.1"/>
    <property type="molecule type" value="Genomic_DNA"/>
</dbReference>
<dbReference type="PIR" id="D75567">
    <property type="entry name" value="D75567"/>
</dbReference>
<dbReference type="RefSeq" id="NP_293762.1">
    <property type="nucleotide sequence ID" value="NC_001263.1"/>
</dbReference>
<dbReference type="SMR" id="Q9RYB4"/>
<dbReference type="FunCoup" id="Q9RYB4">
    <property type="interactions" value="267"/>
</dbReference>
<dbReference type="STRING" id="243230.DR_0036"/>
<dbReference type="PaxDb" id="243230-DR_0036"/>
<dbReference type="EnsemblBacteria" id="AAF09628">
    <property type="protein sequence ID" value="AAF09628"/>
    <property type="gene ID" value="DR_0036"/>
</dbReference>
<dbReference type="KEGG" id="dra:DR_0036"/>
<dbReference type="PATRIC" id="fig|243230.17.peg.201"/>
<dbReference type="eggNOG" id="COG0302">
    <property type="taxonomic scope" value="Bacteria"/>
</dbReference>
<dbReference type="HOGENOM" id="CLU_049768_3_1_0"/>
<dbReference type="InParanoid" id="Q9RYB4"/>
<dbReference type="OrthoDB" id="9801207at2"/>
<dbReference type="UniPathway" id="UPA00848">
    <property type="reaction ID" value="UER00151"/>
</dbReference>
<dbReference type="Proteomes" id="UP000002524">
    <property type="component" value="Chromosome 1"/>
</dbReference>
<dbReference type="GO" id="GO:0005737">
    <property type="term" value="C:cytoplasm"/>
    <property type="evidence" value="ECO:0000318"/>
    <property type="project" value="GO_Central"/>
</dbReference>
<dbReference type="GO" id="GO:0005525">
    <property type="term" value="F:GTP binding"/>
    <property type="evidence" value="ECO:0000318"/>
    <property type="project" value="GO_Central"/>
</dbReference>
<dbReference type="GO" id="GO:0003934">
    <property type="term" value="F:GTP cyclohydrolase I activity"/>
    <property type="evidence" value="ECO:0000318"/>
    <property type="project" value="GO_Central"/>
</dbReference>
<dbReference type="GO" id="GO:0008270">
    <property type="term" value="F:zinc ion binding"/>
    <property type="evidence" value="ECO:0000318"/>
    <property type="project" value="GO_Central"/>
</dbReference>
<dbReference type="GO" id="GO:0006730">
    <property type="term" value="P:one-carbon metabolic process"/>
    <property type="evidence" value="ECO:0007669"/>
    <property type="project" value="UniProtKB-UniRule"/>
</dbReference>
<dbReference type="GO" id="GO:0006729">
    <property type="term" value="P:tetrahydrobiopterin biosynthetic process"/>
    <property type="evidence" value="ECO:0000318"/>
    <property type="project" value="GO_Central"/>
</dbReference>
<dbReference type="GO" id="GO:0046654">
    <property type="term" value="P:tetrahydrofolate biosynthetic process"/>
    <property type="evidence" value="ECO:0007669"/>
    <property type="project" value="UniProtKB-UniRule"/>
</dbReference>
<dbReference type="CDD" id="cd00642">
    <property type="entry name" value="GTP_cyclohydro1"/>
    <property type="match status" value="1"/>
</dbReference>
<dbReference type="FunFam" id="3.30.1130.10:FF:000001">
    <property type="entry name" value="GTP cyclohydrolase 1"/>
    <property type="match status" value="1"/>
</dbReference>
<dbReference type="Gene3D" id="1.10.286.10">
    <property type="match status" value="1"/>
</dbReference>
<dbReference type="Gene3D" id="3.30.1130.10">
    <property type="match status" value="1"/>
</dbReference>
<dbReference type="HAMAP" id="MF_00223">
    <property type="entry name" value="FolE"/>
    <property type="match status" value="1"/>
</dbReference>
<dbReference type="InterPro" id="IPR043133">
    <property type="entry name" value="GTP-CH-I_C/QueF"/>
</dbReference>
<dbReference type="InterPro" id="IPR043134">
    <property type="entry name" value="GTP-CH-I_N"/>
</dbReference>
<dbReference type="InterPro" id="IPR001474">
    <property type="entry name" value="GTP_CycHdrlase_I"/>
</dbReference>
<dbReference type="InterPro" id="IPR018234">
    <property type="entry name" value="GTP_CycHdrlase_I_CS"/>
</dbReference>
<dbReference type="InterPro" id="IPR020602">
    <property type="entry name" value="GTP_CycHdrlase_I_dom"/>
</dbReference>
<dbReference type="NCBIfam" id="TIGR00063">
    <property type="entry name" value="folE"/>
    <property type="match status" value="1"/>
</dbReference>
<dbReference type="NCBIfam" id="NF006825">
    <property type="entry name" value="PRK09347.1-2"/>
    <property type="match status" value="1"/>
</dbReference>
<dbReference type="NCBIfam" id="NF006826">
    <property type="entry name" value="PRK09347.1-3"/>
    <property type="match status" value="1"/>
</dbReference>
<dbReference type="PANTHER" id="PTHR11109:SF7">
    <property type="entry name" value="GTP CYCLOHYDROLASE 1"/>
    <property type="match status" value="1"/>
</dbReference>
<dbReference type="PANTHER" id="PTHR11109">
    <property type="entry name" value="GTP CYCLOHYDROLASE I"/>
    <property type="match status" value="1"/>
</dbReference>
<dbReference type="Pfam" id="PF01227">
    <property type="entry name" value="GTP_cyclohydroI"/>
    <property type="match status" value="1"/>
</dbReference>
<dbReference type="SUPFAM" id="SSF55620">
    <property type="entry name" value="Tetrahydrobiopterin biosynthesis enzymes-like"/>
    <property type="match status" value="1"/>
</dbReference>
<dbReference type="PROSITE" id="PS00859">
    <property type="entry name" value="GTP_CYCLOHYDROL_1_1"/>
    <property type="match status" value="1"/>
</dbReference>
<dbReference type="PROSITE" id="PS00860">
    <property type="entry name" value="GTP_CYCLOHYDROL_1_2"/>
    <property type="match status" value="1"/>
</dbReference>
<gene>
    <name type="primary">folE</name>
    <name type="ordered locus">DR_0036</name>
</gene>
<comment type="catalytic activity">
    <reaction>
        <text>GTP + H2O = 7,8-dihydroneopterin 3'-triphosphate + formate + H(+)</text>
        <dbReference type="Rhea" id="RHEA:17473"/>
        <dbReference type="ChEBI" id="CHEBI:15377"/>
        <dbReference type="ChEBI" id="CHEBI:15378"/>
        <dbReference type="ChEBI" id="CHEBI:15740"/>
        <dbReference type="ChEBI" id="CHEBI:37565"/>
        <dbReference type="ChEBI" id="CHEBI:58462"/>
        <dbReference type="EC" id="3.5.4.16"/>
    </reaction>
</comment>
<comment type="pathway">
    <text>Cofactor biosynthesis; 7,8-dihydroneopterin triphosphate biosynthesis; 7,8-dihydroneopterin triphosphate from GTP: step 1/1.</text>
</comment>
<comment type="subunit">
    <text evidence="1">Toroid-shaped homodecamer, composed of two pentamers of five dimers.</text>
</comment>
<comment type="similarity">
    <text evidence="3">Belongs to the GTP cyclohydrolase I family.</text>
</comment>
<proteinExistence type="inferred from homology"/>
<reference key="1">
    <citation type="journal article" date="1999" name="Science">
        <title>Genome sequence of the radioresistant bacterium Deinococcus radiodurans R1.</title>
        <authorList>
            <person name="White O."/>
            <person name="Eisen J.A."/>
            <person name="Heidelberg J.F."/>
            <person name="Hickey E.K."/>
            <person name="Peterson J.D."/>
            <person name="Dodson R.J."/>
            <person name="Haft D.H."/>
            <person name="Gwinn M.L."/>
            <person name="Nelson W.C."/>
            <person name="Richardson D.L."/>
            <person name="Moffat K.S."/>
            <person name="Qin H."/>
            <person name="Jiang L."/>
            <person name="Pamphile W."/>
            <person name="Crosby M."/>
            <person name="Shen M."/>
            <person name="Vamathevan J.J."/>
            <person name="Lam P."/>
            <person name="McDonald L.A."/>
            <person name="Utterback T.R."/>
            <person name="Zalewski C."/>
            <person name="Makarova K.S."/>
            <person name="Aravind L."/>
            <person name="Daly M.J."/>
            <person name="Minton K.W."/>
            <person name="Fleischmann R.D."/>
            <person name="Ketchum K.A."/>
            <person name="Nelson K.E."/>
            <person name="Salzberg S.L."/>
            <person name="Smith H.O."/>
            <person name="Venter J.C."/>
            <person name="Fraser C.M."/>
        </authorList>
    </citation>
    <scope>NUCLEOTIDE SEQUENCE [LARGE SCALE GENOMIC DNA]</scope>
    <source>
        <strain>ATCC 13939 / DSM 20539 / JCM 16871 / CCUG 27074 / LMG 4051 / NBRC 15346 / NCIMB 9279 / VKM B-1422 / R1</strain>
    </source>
</reference>
<accession>Q9RYB4</accession>
<name>GCH1_DEIRA</name>